<reference key="1">
    <citation type="journal article" date="2001" name="Proc. Natl. Acad. Sci. U.S.A.">
        <title>Complete genome sequence of Caulobacter crescentus.</title>
        <authorList>
            <person name="Nierman W.C."/>
            <person name="Feldblyum T.V."/>
            <person name="Laub M.T."/>
            <person name="Paulsen I.T."/>
            <person name="Nelson K.E."/>
            <person name="Eisen J.A."/>
            <person name="Heidelberg J.F."/>
            <person name="Alley M.R.K."/>
            <person name="Ohta N."/>
            <person name="Maddock J.R."/>
            <person name="Potocka I."/>
            <person name="Nelson W.C."/>
            <person name="Newton A."/>
            <person name="Stephens C."/>
            <person name="Phadke N.D."/>
            <person name="Ely B."/>
            <person name="DeBoy R.T."/>
            <person name="Dodson R.J."/>
            <person name="Durkin A.S."/>
            <person name="Gwinn M.L."/>
            <person name="Haft D.H."/>
            <person name="Kolonay J.F."/>
            <person name="Smit J."/>
            <person name="Craven M.B."/>
            <person name="Khouri H.M."/>
            <person name="Shetty J."/>
            <person name="Berry K.J."/>
            <person name="Utterback T.R."/>
            <person name="Tran K."/>
            <person name="Wolf A.M."/>
            <person name="Vamathevan J.J."/>
            <person name="Ermolaeva M.D."/>
            <person name="White O."/>
            <person name="Salzberg S.L."/>
            <person name="Venter J.C."/>
            <person name="Shapiro L."/>
            <person name="Fraser C.M."/>
        </authorList>
    </citation>
    <scope>NUCLEOTIDE SEQUENCE [LARGE SCALE GENOMIC DNA]</scope>
    <source>
        <strain>ATCC 19089 / CIP 103742 / CB 15</strain>
    </source>
</reference>
<reference key="2">
    <citation type="journal article" date="1995" name="J. Bacteriol.">
        <title>A consensus promoter sequence for Caulobacter crescentus genes involved in biosynthetic and housekeeping functions.</title>
        <authorList>
            <person name="Malakooti J."/>
            <person name="Wang S.P."/>
            <person name="Ely B."/>
        </authorList>
    </citation>
    <scope>NUCLEOTIDE SEQUENCE [GENOMIC DNA] OF 1-84</scope>
</reference>
<reference key="3">
    <citation type="journal article" date="1994" name="J. Bacteriol.">
        <title>Identification and characterization of the ilvR gene encoding a LysR-type regulator of Caulobacter crescentus.</title>
        <authorList>
            <person name="Malakooti J."/>
            <person name="Ely B."/>
        </authorList>
    </citation>
    <scope>INDUCTION</scope>
    <source>
        <strain>ATCC 19089 / CIP 103742 / CB 15</strain>
    </source>
</reference>
<keyword id="KW-0001">2Fe-2S</keyword>
<keyword id="KW-0028">Amino-acid biosynthesis</keyword>
<keyword id="KW-0100">Branched-chain amino acid biosynthesis</keyword>
<keyword id="KW-0408">Iron</keyword>
<keyword id="KW-0411">Iron-sulfur</keyword>
<keyword id="KW-0456">Lyase</keyword>
<keyword id="KW-0460">Magnesium</keyword>
<keyword id="KW-0479">Metal-binding</keyword>
<keyword id="KW-1185">Reference proteome</keyword>
<dbReference type="EC" id="4.2.1.9" evidence="1"/>
<dbReference type="EMBL" id="AE005673">
    <property type="protein sequence ID" value="AAK25006.1"/>
    <property type="molecule type" value="Genomic_DNA"/>
</dbReference>
<dbReference type="EMBL" id="L24392">
    <property type="protein sequence ID" value="AAA80549.1"/>
    <property type="molecule type" value="Genomic_DNA"/>
</dbReference>
<dbReference type="PIR" id="B53372">
    <property type="entry name" value="B53372"/>
</dbReference>
<dbReference type="PIR" id="B87626">
    <property type="entry name" value="B87626"/>
</dbReference>
<dbReference type="RefSeq" id="NP_421838.1">
    <property type="nucleotide sequence ID" value="NC_002696.2"/>
</dbReference>
<dbReference type="RefSeq" id="WP_010920880.1">
    <property type="nucleotide sequence ID" value="NC_002696.2"/>
</dbReference>
<dbReference type="SMR" id="P55186"/>
<dbReference type="STRING" id="190650.CC_3044"/>
<dbReference type="EnsemblBacteria" id="AAK25006">
    <property type="protein sequence ID" value="AAK25006"/>
    <property type="gene ID" value="CC_3044"/>
</dbReference>
<dbReference type="KEGG" id="ccr:CC_3044"/>
<dbReference type="PATRIC" id="fig|190650.5.peg.3048"/>
<dbReference type="eggNOG" id="COG0129">
    <property type="taxonomic scope" value="Bacteria"/>
</dbReference>
<dbReference type="HOGENOM" id="CLU_014271_4_2_5"/>
<dbReference type="BioCyc" id="CAULO:CC3044-MONOMER"/>
<dbReference type="UniPathway" id="UPA00047">
    <property type="reaction ID" value="UER00057"/>
</dbReference>
<dbReference type="UniPathway" id="UPA00049">
    <property type="reaction ID" value="UER00061"/>
</dbReference>
<dbReference type="Proteomes" id="UP000001816">
    <property type="component" value="Chromosome"/>
</dbReference>
<dbReference type="GO" id="GO:0005829">
    <property type="term" value="C:cytosol"/>
    <property type="evidence" value="ECO:0007669"/>
    <property type="project" value="TreeGrafter"/>
</dbReference>
<dbReference type="GO" id="GO:0051537">
    <property type="term" value="F:2 iron, 2 sulfur cluster binding"/>
    <property type="evidence" value="ECO:0007669"/>
    <property type="project" value="UniProtKB-UniRule"/>
</dbReference>
<dbReference type="GO" id="GO:0004160">
    <property type="term" value="F:dihydroxy-acid dehydratase activity"/>
    <property type="evidence" value="ECO:0007669"/>
    <property type="project" value="UniProtKB-UniRule"/>
</dbReference>
<dbReference type="GO" id="GO:0000287">
    <property type="term" value="F:magnesium ion binding"/>
    <property type="evidence" value="ECO:0007669"/>
    <property type="project" value="UniProtKB-UniRule"/>
</dbReference>
<dbReference type="GO" id="GO:0009097">
    <property type="term" value="P:isoleucine biosynthetic process"/>
    <property type="evidence" value="ECO:0007669"/>
    <property type="project" value="UniProtKB-UniRule"/>
</dbReference>
<dbReference type="GO" id="GO:0009099">
    <property type="term" value="P:L-valine biosynthetic process"/>
    <property type="evidence" value="ECO:0007669"/>
    <property type="project" value="UniProtKB-UniRule"/>
</dbReference>
<dbReference type="FunFam" id="3.50.30.80:FF:000001">
    <property type="entry name" value="Dihydroxy-acid dehydratase"/>
    <property type="match status" value="1"/>
</dbReference>
<dbReference type="Gene3D" id="3.50.30.80">
    <property type="entry name" value="IlvD/EDD C-terminal domain-like"/>
    <property type="match status" value="1"/>
</dbReference>
<dbReference type="HAMAP" id="MF_00012">
    <property type="entry name" value="IlvD"/>
    <property type="match status" value="1"/>
</dbReference>
<dbReference type="InterPro" id="IPR042096">
    <property type="entry name" value="Dihydro-acid_dehy_C"/>
</dbReference>
<dbReference type="InterPro" id="IPR004404">
    <property type="entry name" value="DihydroxyA_deHydtase"/>
</dbReference>
<dbReference type="InterPro" id="IPR020558">
    <property type="entry name" value="DiOHA_6PGluconate_deHydtase_CS"/>
</dbReference>
<dbReference type="InterPro" id="IPR056740">
    <property type="entry name" value="ILV_EDD_C"/>
</dbReference>
<dbReference type="InterPro" id="IPR000581">
    <property type="entry name" value="ILV_EDD_N"/>
</dbReference>
<dbReference type="InterPro" id="IPR037237">
    <property type="entry name" value="IlvD/EDD_N"/>
</dbReference>
<dbReference type="NCBIfam" id="TIGR00110">
    <property type="entry name" value="ilvD"/>
    <property type="match status" value="1"/>
</dbReference>
<dbReference type="NCBIfam" id="NF009103">
    <property type="entry name" value="PRK12448.1"/>
    <property type="match status" value="1"/>
</dbReference>
<dbReference type="PANTHER" id="PTHR43661">
    <property type="entry name" value="D-XYLONATE DEHYDRATASE"/>
    <property type="match status" value="1"/>
</dbReference>
<dbReference type="PANTHER" id="PTHR43661:SF3">
    <property type="entry name" value="D-XYLONATE DEHYDRATASE YAGF-RELATED"/>
    <property type="match status" value="1"/>
</dbReference>
<dbReference type="Pfam" id="PF24877">
    <property type="entry name" value="ILV_EDD_C"/>
    <property type="match status" value="1"/>
</dbReference>
<dbReference type="Pfam" id="PF00920">
    <property type="entry name" value="ILVD_EDD_N"/>
    <property type="match status" value="1"/>
</dbReference>
<dbReference type="SUPFAM" id="SSF143975">
    <property type="entry name" value="IlvD/EDD N-terminal domain-like"/>
    <property type="match status" value="1"/>
</dbReference>
<dbReference type="SUPFAM" id="SSF52016">
    <property type="entry name" value="LeuD/IlvD-like"/>
    <property type="match status" value="1"/>
</dbReference>
<dbReference type="PROSITE" id="PS00886">
    <property type="entry name" value="ILVD_EDD_1"/>
    <property type="match status" value="1"/>
</dbReference>
<dbReference type="PROSITE" id="PS00887">
    <property type="entry name" value="ILVD_EDD_2"/>
    <property type="match status" value="1"/>
</dbReference>
<feature type="chain" id="PRO_0000103456" description="Dihydroxy-acid dehydratase">
    <location>
        <begin position="1"/>
        <end position="617"/>
    </location>
</feature>
<feature type="active site" description="Proton acceptor" evidence="1">
    <location>
        <position position="517"/>
    </location>
</feature>
<feature type="binding site" evidence="1">
    <location>
        <position position="81"/>
    </location>
    <ligand>
        <name>Mg(2+)</name>
        <dbReference type="ChEBI" id="CHEBI:18420"/>
    </ligand>
</feature>
<feature type="binding site" evidence="1">
    <location>
        <position position="122"/>
    </location>
    <ligand>
        <name>[2Fe-2S] cluster</name>
        <dbReference type="ChEBI" id="CHEBI:190135"/>
    </ligand>
</feature>
<feature type="binding site" evidence="1">
    <location>
        <position position="123"/>
    </location>
    <ligand>
        <name>Mg(2+)</name>
        <dbReference type="ChEBI" id="CHEBI:18420"/>
    </ligand>
</feature>
<feature type="binding site" description="via carbamate group" evidence="1">
    <location>
        <position position="124"/>
    </location>
    <ligand>
        <name>Mg(2+)</name>
        <dbReference type="ChEBI" id="CHEBI:18420"/>
    </ligand>
</feature>
<feature type="binding site" evidence="1">
    <location>
        <position position="195"/>
    </location>
    <ligand>
        <name>[2Fe-2S] cluster</name>
        <dbReference type="ChEBI" id="CHEBI:190135"/>
    </ligand>
</feature>
<feature type="binding site" evidence="1">
    <location>
        <position position="491"/>
    </location>
    <ligand>
        <name>Mg(2+)</name>
        <dbReference type="ChEBI" id="CHEBI:18420"/>
    </ligand>
</feature>
<feature type="modified residue" description="N6-carboxylysine" evidence="1">
    <location>
        <position position="124"/>
    </location>
</feature>
<organism>
    <name type="scientific">Caulobacter vibrioides (strain ATCC 19089 / CIP 103742 / CB 15)</name>
    <name type="common">Caulobacter crescentus</name>
    <dbReference type="NCBI Taxonomy" id="190650"/>
    <lineage>
        <taxon>Bacteria</taxon>
        <taxon>Pseudomonadati</taxon>
        <taxon>Pseudomonadota</taxon>
        <taxon>Alphaproteobacteria</taxon>
        <taxon>Caulobacterales</taxon>
        <taxon>Caulobacteraceae</taxon>
        <taxon>Caulobacter</taxon>
    </lineage>
</organism>
<name>ILVD_CAUVC</name>
<protein>
    <recommendedName>
        <fullName evidence="1">Dihydroxy-acid dehydratase</fullName>
        <shortName evidence="1">DAD</shortName>
        <ecNumber evidence="1">4.2.1.9</ecNumber>
    </recommendedName>
</protein>
<sequence>MPPYRSRTTTHGRNMAGARGLWRATGMKDEDFGKPIIAVANSFTQFVPGHVHLKDLGQLVAREIEAAGGVAKEFNTIAVDDGIAMGHGGMLYSLPSRDLIADSVEYMVNAHCADAIVCISNCDKITPGMLMAAMRLNIPVVFVSGGPMEAGKVTVKGKIRALDLVDAMVVAADDSYSDEEVEAIEKAACPTCGSCSGMFTANSMNCLTEALGLSLPGNGSVLATHADREALFKEAGRVVVDLCQRWYEQEDATALPRGIATRAAFENAMSLDIAMGGSTNTVLHLLAAAHEGGIDFSMADIDRLSRHVPCLSKVAPAKSDVHMEDVHRAGGVMAILGELERGGLIDASQPTVHAPTMGEALARWDIGRTNSQIAHEFFKAAPGGKPTQVAFSQAARWEELDLDRENGVIRSVEHPFSKDGGLAVLFGNLAPEGCIVKTAGVDESILTFRGTARVFESQDAAVSGILGGQVKAGEVVVIRYEGPKGGPGMQEMLYPTTYLKSKGLGAACALVTDGRFSGGTSGLSIGHVSPEAGEGGLIALVETGDPILIDIPTRGITLEVSDAVLAARREAQLARGKDAWTPLNRKRDLTPALRAYAAMTTNAARGAVRDVSQIERG</sequence>
<accession>P55186</accession>
<evidence type="ECO:0000255" key="1">
    <source>
        <dbReference type="HAMAP-Rule" id="MF_00012"/>
    </source>
</evidence>
<evidence type="ECO:0000269" key="2">
    <source>
    </source>
</evidence>
<comment type="function">
    <text evidence="1">Functions in the biosynthesis of branched-chain amino acids. Catalyzes the dehydration of (2R,3R)-2,3-dihydroxy-3-methylpentanoate (2,3-dihydroxy-3-methylvalerate) into 2-oxo-3-methylpentanoate (2-oxo-3-methylvalerate) and of (2R)-2,3-dihydroxy-3-methylbutanoate (2,3-dihydroxyisovalerate) into 2-oxo-3-methylbutanoate (2-oxoisovalerate), the penultimate precursor to L-isoleucine and L-valine, respectively.</text>
</comment>
<comment type="catalytic activity">
    <reaction evidence="1">
        <text>(2R)-2,3-dihydroxy-3-methylbutanoate = 3-methyl-2-oxobutanoate + H2O</text>
        <dbReference type="Rhea" id="RHEA:24809"/>
        <dbReference type="ChEBI" id="CHEBI:11851"/>
        <dbReference type="ChEBI" id="CHEBI:15377"/>
        <dbReference type="ChEBI" id="CHEBI:49072"/>
        <dbReference type="EC" id="4.2.1.9"/>
    </reaction>
    <physiologicalReaction direction="left-to-right" evidence="1">
        <dbReference type="Rhea" id="RHEA:24810"/>
    </physiologicalReaction>
</comment>
<comment type="catalytic activity">
    <reaction evidence="1">
        <text>(2R,3R)-2,3-dihydroxy-3-methylpentanoate = (S)-3-methyl-2-oxopentanoate + H2O</text>
        <dbReference type="Rhea" id="RHEA:27694"/>
        <dbReference type="ChEBI" id="CHEBI:15377"/>
        <dbReference type="ChEBI" id="CHEBI:35146"/>
        <dbReference type="ChEBI" id="CHEBI:49258"/>
        <dbReference type="EC" id="4.2.1.9"/>
    </reaction>
    <physiologicalReaction direction="left-to-right" evidence="1">
        <dbReference type="Rhea" id="RHEA:27695"/>
    </physiologicalReaction>
</comment>
<comment type="cofactor">
    <cofactor evidence="1">
        <name>[2Fe-2S] cluster</name>
        <dbReference type="ChEBI" id="CHEBI:190135"/>
    </cofactor>
    <text evidence="1">Binds 1 [2Fe-2S] cluster per subunit. This cluster acts as a Lewis acid cofactor.</text>
</comment>
<comment type="cofactor">
    <cofactor evidence="1">
        <name>Mg(2+)</name>
        <dbReference type="ChEBI" id="CHEBI:18420"/>
    </cofactor>
</comment>
<comment type="pathway">
    <text evidence="1">Amino-acid biosynthesis; L-isoleucine biosynthesis; L-isoleucine from 2-oxobutanoate: step 3/4.</text>
</comment>
<comment type="pathway">
    <text evidence="1">Amino-acid biosynthesis; L-valine biosynthesis; L-valine from pyruvate: step 3/4.</text>
</comment>
<comment type="subunit">
    <text evidence="1">Homodimer.</text>
</comment>
<comment type="induction">
    <text evidence="2">Positively regulated by the IlvR protein.</text>
</comment>
<comment type="similarity">
    <text evidence="1">Belongs to the IlvD/Edd family.</text>
</comment>
<gene>
    <name evidence="1" type="primary">ilvD</name>
    <name type="ordered locus">CC_3044</name>
</gene>
<proteinExistence type="evidence at transcript level"/>